<feature type="chain" id="PRO_0000122403" description="Prolyl endopeptidase">
    <location>
        <begin position="1"/>
        <end position="710"/>
    </location>
</feature>
<feature type="active site" description="Charge relay system" evidence="2 3">
    <location>
        <position position="554"/>
    </location>
</feature>
<feature type="active site" description="Charge relay system">
    <location>
        <position position="641"/>
    </location>
</feature>
<feature type="active site" description="Charge relay system" evidence="2 4">
    <location>
        <position position="680"/>
    </location>
</feature>
<feature type="modified residue" description="N-acetylmethionine" evidence="1">
    <location>
        <position position="1"/>
    </location>
</feature>
<feature type="modified residue" description="N6-acetyllysine" evidence="1">
    <location>
        <position position="157"/>
    </location>
</feature>
<feature type="sequence variant">
    <original>A</original>
    <variation>H</variation>
    <location>
        <position position="29"/>
    </location>
</feature>
<feature type="strand" evidence="9">
    <location>
        <begin position="16"/>
        <end position="19"/>
    </location>
</feature>
<feature type="strand" evidence="9">
    <location>
        <begin position="22"/>
        <end position="25"/>
    </location>
</feature>
<feature type="helix" evidence="9">
    <location>
        <begin position="29"/>
        <end position="32"/>
    </location>
</feature>
<feature type="strand" evidence="10">
    <location>
        <begin position="34"/>
        <end position="36"/>
    </location>
</feature>
<feature type="helix" evidence="9">
    <location>
        <begin position="37"/>
        <end position="56"/>
    </location>
</feature>
<feature type="helix" evidence="9">
    <location>
        <begin position="59"/>
        <end position="71"/>
    </location>
</feature>
<feature type="strand" evidence="9">
    <location>
        <begin position="80"/>
        <end position="82"/>
    </location>
</feature>
<feature type="strand" evidence="9">
    <location>
        <begin position="85"/>
        <end position="91"/>
    </location>
</feature>
<feature type="strand" evidence="9">
    <location>
        <begin position="99"/>
        <end position="105"/>
    </location>
</feature>
<feature type="strand" evidence="9">
    <location>
        <begin position="111"/>
        <end position="114"/>
    </location>
</feature>
<feature type="helix" evidence="9">
    <location>
        <begin position="116"/>
        <end position="119"/>
    </location>
</feature>
<feature type="strand" evidence="8">
    <location>
        <begin position="121"/>
        <end position="123"/>
    </location>
</feature>
<feature type="strand" evidence="9">
    <location>
        <begin position="125"/>
        <end position="132"/>
    </location>
</feature>
<feature type="strand" evidence="9">
    <location>
        <begin position="136"/>
        <end position="145"/>
    </location>
</feature>
<feature type="strand" evidence="9">
    <location>
        <begin position="151"/>
        <end position="157"/>
    </location>
</feature>
<feature type="turn" evidence="9">
    <location>
        <begin position="158"/>
        <end position="161"/>
    </location>
</feature>
<feature type="strand" evidence="9">
    <location>
        <begin position="162"/>
        <end position="171"/>
    </location>
</feature>
<feature type="strand" evidence="9">
    <location>
        <begin position="176"/>
        <end position="178"/>
    </location>
</feature>
<feature type="strand" evidence="9">
    <location>
        <begin position="182"/>
        <end position="189"/>
    </location>
</feature>
<feature type="strand" evidence="9">
    <location>
        <begin position="198"/>
        <end position="200"/>
    </location>
</feature>
<feature type="strand" evidence="9">
    <location>
        <begin position="209"/>
        <end position="214"/>
    </location>
</feature>
<feature type="helix" evidence="9">
    <location>
        <begin position="219"/>
        <end position="221"/>
    </location>
</feature>
<feature type="strand" evidence="9">
    <location>
        <begin position="223"/>
        <end position="226"/>
    </location>
</feature>
<feature type="strand" evidence="9">
    <location>
        <begin position="235"/>
        <end position="240"/>
    </location>
</feature>
<feature type="strand" evidence="9">
    <location>
        <begin position="246"/>
        <end position="252"/>
    </location>
</feature>
<feature type="strand" evidence="9">
    <location>
        <begin position="254"/>
        <end position="257"/>
    </location>
</feature>
<feature type="strand" evidence="9">
    <location>
        <begin position="260"/>
        <end position="265"/>
    </location>
</feature>
<feature type="helix" evidence="9">
    <location>
        <begin position="266"/>
        <end position="268"/>
    </location>
</feature>
<feature type="strand" evidence="9">
    <location>
        <begin position="269"/>
        <end position="273"/>
    </location>
</feature>
<feature type="strand" evidence="9">
    <location>
        <begin position="280"/>
        <end position="283"/>
    </location>
</feature>
<feature type="strand" evidence="9">
    <location>
        <begin position="285"/>
        <end position="288"/>
    </location>
</feature>
<feature type="strand" evidence="9">
    <location>
        <begin position="290"/>
        <end position="296"/>
    </location>
</feature>
<feature type="strand" evidence="9">
    <location>
        <begin position="299"/>
        <end position="304"/>
    </location>
</feature>
<feature type="strand" evidence="9">
    <location>
        <begin position="312"/>
        <end position="317"/>
    </location>
</feature>
<feature type="helix" evidence="9">
    <location>
        <begin position="323"/>
        <end position="325"/>
    </location>
</feature>
<feature type="strand" evidence="9">
    <location>
        <begin position="327"/>
        <end position="330"/>
    </location>
</feature>
<feature type="strand" evidence="9">
    <location>
        <begin position="337"/>
        <end position="344"/>
    </location>
</feature>
<feature type="turn" evidence="9">
    <location>
        <begin position="345"/>
        <end position="347"/>
    </location>
</feature>
<feature type="strand" evidence="9">
    <location>
        <begin position="348"/>
        <end position="355"/>
    </location>
</feature>
<feature type="strand" evidence="9">
    <location>
        <begin position="358"/>
        <end position="365"/>
    </location>
</feature>
<feature type="turn" evidence="9">
    <location>
        <begin position="366"/>
        <end position="368"/>
    </location>
</feature>
<feature type="strand" evidence="9">
    <location>
        <begin position="371"/>
        <end position="375"/>
    </location>
</feature>
<feature type="strand" evidence="9">
    <location>
        <begin position="379"/>
        <end position="386"/>
    </location>
</feature>
<feature type="strand" evidence="9">
    <location>
        <begin position="392"/>
        <end position="399"/>
    </location>
</feature>
<feature type="strand" evidence="6">
    <location>
        <begin position="401"/>
        <end position="403"/>
    </location>
</feature>
<feature type="strand" evidence="9">
    <location>
        <begin position="406"/>
        <end position="411"/>
    </location>
</feature>
<feature type="strand" evidence="9">
    <location>
        <begin position="414"/>
        <end position="416"/>
    </location>
</feature>
<feature type="strand" evidence="9">
    <location>
        <begin position="420"/>
        <end position="424"/>
    </location>
</feature>
<feature type="strand" evidence="12">
    <location>
        <begin position="428"/>
        <end position="430"/>
    </location>
</feature>
<feature type="helix" evidence="9">
    <location>
        <begin position="432"/>
        <end position="434"/>
    </location>
</feature>
<feature type="strand" evidence="9">
    <location>
        <begin position="435"/>
        <end position="443"/>
    </location>
</feature>
<feature type="strand" evidence="10">
    <location>
        <begin position="445"/>
        <end position="447"/>
    </location>
</feature>
<feature type="strand" evidence="9">
    <location>
        <begin position="449"/>
        <end position="457"/>
    </location>
</feature>
<feature type="strand" evidence="9">
    <location>
        <begin position="468"/>
        <end position="471"/>
    </location>
</feature>
<feature type="helix" evidence="9">
    <location>
        <begin position="486"/>
        <end position="495"/>
    </location>
</feature>
<feature type="strand" evidence="9">
    <location>
        <begin position="498"/>
        <end position="502"/>
    </location>
</feature>
<feature type="helix" evidence="9">
    <location>
        <begin position="511"/>
        <end position="516"/>
    </location>
</feature>
<feature type="helix" evidence="9">
    <location>
        <begin position="520"/>
        <end position="523"/>
    </location>
</feature>
<feature type="helix" evidence="9">
    <location>
        <begin position="524"/>
        <end position="539"/>
    </location>
</feature>
<feature type="helix" evidence="9">
    <location>
        <begin position="545"/>
        <end position="547"/>
    </location>
</feature>
<feature type="strand" evidence="9">
    <location>
        <begin position="548"/>
        <end position="553"/>
    </location>
</feature>
<feature type="helix" evidence="9">
    <location>
        <begin position="555"/>
        <end position="566"/>
    </location>
</feature>
<feature type="helix" evidence="9">
    <location>
        <begin position="568"/>
        <end position="570"/>
    </location>
</feature>
<feature type="strand" evidence="9">
    <location>
        <begin position="572"/>
        <end position="578"/>
    </location>
</feature>
<feature type="turn" evidence="9">
    <location>
        <begin position="583"/>
        <end position="585"/>
    </location>
</feature>
<feature type="helix" evidence="9">
    <location>
        <begin position="586"/>
        <end position="588"/>
    </location>
</feature>
<feature type="helix" evidence="9">
    <location>
        <begin position="592"/>
        <end position="595"/>
    </location>
</feature>
<feature type="helix" evidence="9">
    <location>
        <begin position="596"/>
        <end position="599"/>
    </location>
</feature>
<feature type="helix" evidence="9">
    <location>
        <begin position="605"/>
        <end position="614"/>
    </location>
</feature>
<feature type="helix" evidence="9">
    <location>
        <begin position="616"/>
        <end position="618"/>
    </location>
</feature>
<feature type="strand" evidence="10">
    <location>
        <begin position="624"/>
        <end position="627"/>
    </location>
</feature>
<feature type="strand" evidence="9">
    <location>
        <begin position="632"/>
        <end position="638"/>
    </location>
</feature>
<feature type="strand" evidence="7">
    <location>
        <begin position="642"/>
        <end position="644"/>
    </location>
</feature>
<feature type="helix" evidence="9">
    <location>
        <begin position="647"/>
        <end position="659"/>
    </location>
</feature>
<feature type="turn" evidence="9">
    <location>
        <begin position="660"/>
        <end position="662"/>
    </location>
</feature>
<feature type="strand" evidence="11">
    <location>
        <begin position="663"/>
        <end position="665"/>
    </location>
</feature>
<feature type="strand" evidence="9">
    <location>
        <begin position="670"/>
        <end position="677"/>
    </location>
</feature>
<feature type="helix" evidence="9">
    <location>
        <begin position="686"/>
        <end position="704"/>
    </location>
</feature>
<organism>
    <name type="scientific">Sus scrofa</name>
    <name type="common">Pig</name>
    <dbReference type="NCBI Taxonomy" id="9823"/>
    <lineage>
        <taxon>Eukaryota</taxon>
        <taxon>Metazoa</taxon>
        <taxon>Chordata</taxon>
        <taxon>Craniata</taxon>
        <taxon>Vertebrata</taxon>
        <taxon>Euteleostomi</taxon>
        <taxon>Mammalia</taxon>
        <taxon>Eutheria</taxon>
        <taxon>Laurasiatheria</taxon>
        <taxon>Artiodactyla</taxon>
        <taxon>Suina</taxon>
        <taxon>Suidae</taxon>
        <taxon>Sus</taxon>
    </lineage>
</organism>
<evidence type="ECO:0000250" key="1">
    <source>
        <dbReference type="UniProtKB" id="P48147"/>
    </source>
</evidence>
<evidence type="ECO:0000255" key="2">
    <source>
        <dbReference type="PROSITE-ProRule" id="PRU10084"/>
    </source>
</evidence>
<evidence type="ECO:0000269" key="3">
    <source>
    </source>
</evidence>
<evidence type="ECO:0000269" key="4">
    <source>
    </source>
</evidence>
<evidence type="ECO:0000305" key="5"/>
<evidence type="ECO:0007829" key="6">
    <source>
        <dbReference type="PDB" id="1H2W"/>
    </source>
</evidence>
<evidence type="ECO:0007829" key="7">
    <source>
        <dbReference type="PDB" id="1O6G"/>
    </source>
</evidence>
<evidence type="ECO:0007829" key="8">
    <source>
        <dbReference type="PDB" id="1QFM"/>
    </source>
</evidence>
<evidence type="ECO:0007829" key="9">
    <source>
        <dbReference type="PDB" id="2XDW"/>
    </source>
</evidence>
<evidence type="ECO:0007829" key="10">
    <source>
        <dbReference type="PDB" id="3EQ8"/>
    </source>
</evidence>
<evidence type="ECO:0007829" key="11">
    <source>
        <dbReference type="PDB" id="3EQ9"/>
    </source>
</evidence>
<evidence type="ECO:0007829" key="12">
    <source>
        <dbReference type="PDB" id="4AX4"/>
    </source>
</evidence>
<reference key="1">
    <citation type="journal article" date="1991" name="Biochemistry">
        <title>cDNA cloning of porcine brain prolyl endopeptidase and identification of the active-site seryl residue.</title>
        <authorList>
            <person name="Rennex D."/>
            <person name="Hemmings B.A."/>
            <person name="Hofsteenge J."/>
            <person name="Stone S.R."/>
        </authorList>
    </citation>
    <scope>NUCLEOTIDE SEQUENCE [MRNA]</scope>
    <scope>PARTIAL PROTEIN SEQUENCE</scope>
    <scope>ACTIVE SITE SER-554</scope>
    <source>
        <tissue>Brain</tissue>
    </source>
</reference>
<reference key="2">
    <citation type="journal article" date="1991" name="Biochem. J.">
        <title>Inactivation of prolyl endopeptidase by a peptidylchloromethane. Kinetics of inactivation and identification of sites of modification.</title>
        <authorList>
            <person name="Stone S.R."/>
            <person name="Rennex D."/>
            <person name="Wikstrom P."/>
            <person name="Shaw E."/>
            <person name="Hofsteenge J."/>
        </authorList>
    </citation>
    <scope>ACTIVE SITE HIS-680</scope>
</reference>
<reference key="3">
    <citation type="journal article" date="1998" name="Cell">
        <title>Prolyl oligopeptidase: an unusual beta-propeller domain regulates proteolysis.</title>
        <authorList>
            <person name="Fueloep V."/>
            <person name="Bocskei Z."/>
            <person name="Polgar L."/>
        </authorList>
    </citation>
    <scope>X-RAY CRYSTALLOGRAPHY (1.4 ANGSTROMS)</scope>
</reference>
<name>PPCE_PIG</name>
<sequence length="710" mass="80770">MLSFQYPDVYRDETAIQDYHGHKVCDPYAWLEDPDSEQTKAFVEAQNKITVPFLEQCPIRGLYKERMTELYDYPKYSCHFKKGKRYFYFYNTGLQNQRVLYVQDSLEGEARVFLDPNILSDDGTVALRGYAFSEDGEYFAYGLSASGSDWVTIKFMKVDGAKELPDVLERVKFSCMAWTHDGKGMFYNAYPQQDGKSDGTETSTNLHQKLYYHVLGTDQSEDILCAEFPDEPKWMGGAELSDDGRYVLLSIREGCDPVNRLWYCDLQQESNGITGILKWVKLIDNFEGEYDYVTNEGTVFTFKTNRHSPNYRLINIDFTDPEESKWKVLVPEHEKDVLEWVACVRSNFLVLCYLHDVKNTLQLHDLATGALLKIFPLEVGSVVGYSGQKKDTEIFYQFTSFLSPGIIYHCDLTKEELEPRVFREVTVKGIDASDYQTVQIFYPSKDGTKIPMFIVHKKGIKLDGSHPAFLYGYGGFNISITPNYSVSRLIFVRHMGGVLAVANIRGGGEYGETWHKGGILANKQNCFDDFQCAAEYLIKEGYTSPKRLTINGGSNGGLLVATCANQRPDLFGCVIAQVGVMDMLKFHKYTIGHAWTTDYGCSDSKQHFEWLIKYSPLHNVKLPEADDIQYPSMLLLTADHDDRVVPLHSLKFIATLQYIVGRSRKQNNPLLIHVDTKAGHGAGKPTAKVIEEVSDMFAFIARCLNIDWIP</sequence>
<protein>
    <recommendedName>
        <fullName>Prolyl endopeptidase</fullName>
        <shortName>PE</shortName>
        <ecNumber>3.4.21.26</ecNumber>
    </recommendedName>
    <alternativeName>
        <fullName>Post-proline cleaving enzyme</fullName>
    </alternativeName>
</protein>
<proteinExistence type="evidence at protein level"/>
<dbReference type="EC" id="3.4.21.26"/>
<dbReference type="EMBL" id="M64227">
    <property type="protein sequence ID" value="AAA31110.1"/>
    <property type="molecule type" value="mRNA"/>
</dbReference>
<dbReference type="PIR" id="A37942">
    <property type="entry name" value="A37942"/>
</dbReference>
<dbReference type="RefSeq" id="NP_001004050.1">
    <property type="nucleotide sequence ID" value="NM_001004050.1"/>
</dbReference>
<dbReference type="PDB" id="1E5T">
    <property type="method" value="X-ray"/>
    <property type="resolution" value="1.70 A"/>
    <property type="chains" value="A=1-710"/>
</dbReference>
<dbReference type="PDB" id="1E8M">
    <property type="method" value="X-ray"/>
    <property type="resolution" value="1.50 A"/>
    <property type="chains" value="A=1-710"/>
</dbReference>
<dbReference type="PDB" id="1E8N">
    <property type="method" value="X-ray"/>
    <property type="resolution" value="1.50 A"/>
    <property type="chains" value="A=1-710"/>
</dbReference>
<dbReference type="PDB" id="1H2W">
    <property type="method" value="X-ray"/>
    <property type="resolution" value="1.39 A"/>
    <property type="chains" value="A=1-710"/>
</dbReference>
<dbReference type="PDB" id="1H2X">
    <property type="method" value="X-ray"/>
    <property type="resolution" value="1.49 A"/>
    <property type="chains" value="A=1-710"/>
</dbReference>
<dbReference type="PDB" id="1H2Y">
    <property type="method" value="X-ray"/>
    <property type="resolution" value="1.78 A"/>
    <property type="chains" value="A=1-710"/>
</dbReference>
<dbReference type="PDB" id="1H2Z">
    <property type="method" value="X-ray"/>
    <property type="resolution" value="1.65 A"/>
    <property type="chains" value="A=1-710"/>
</dbReference>
<dbReference type="PDB" id="1O6F">
    <property type="method" value="X-ray"/>
    <property type="resolution" value="1.60 A"/>
    <property type="chains" value="A=1-710"/>
</dbReference>
<dbReference type="PDB" id="1O6G">
    <property type="method" value="X-ray"/>
    <property type="resolution" value="1.40 A"/>
    <property type="chains" value="A=1-710"/>
</dbReference>
<dbReference type="PDB" id="1QFM">
    <property type="method" value="X-ray"/>
    <property type="resolution" value="1.40 A"/>
    <property type="chains" value="A=1-710"/>
</dbReference>
<dbReference type="PDB" id="1QFS">
    <property type="method" value="X-ray"/>
    <property type="resolution" value="2.00 A"/>
    <property type="chains" value="A=1-710"/>
</dbReference>
<dbReference type="PDB" id="1UOO">
    <property type="method" value="X-ray"/>
    <property type="resolution" value="2.35 A"/>
    <property type="chains" value="A=1-710"/>
</dbReference>
<dbReference type="PDB" id="1UOP">
    <property type="method" value="X-ray"/>
    <property type="resolution" value="1.85 A"/>
    <property type="chains" value="A=1-710"/>
</dbReference>
<dbReference type="PDB" id="1UOQ">
    <property type="method" value="X-ray"/>
    <property type="resolution" value="2.10 A"/>
    <property type="chains" value="A=1-710"/>
</dbReference>
<dbReference type="PDB" id="1VZ2">
    <property type="method" value="X-ray"/>
    <property type="resolution" value="2.20 A"/>
    <property type="chains" value="A=1-710"/>
</dbReference>
<dbReference type="PDB" id="1VZ3">
    <property type="method" value="X-ray"/>
    <property type="resolution" value="1.60 A"/>
    <property type="chains" value="A=1-710"/>
</dbReference>
<dbReference type="PDB" id="2XDW">
    <property type="method" value="X-ray"/>
    <property type="resolution" value="1.35 A"/>
    <property type="chains" value="A=1-710"/>
</dbReference>
<dbReference type="PDB" id="3EQ7">
    <property type="method" value="X-ray"/>
    <property type="resolution" value="2.89 A"/>
    <property type="chains" value="A=1-710"/>
</dbReference>
<dbReference type="PDB" id="3EQ8">
    <property type="method" value="X-ray"/>
    <property type="resolution" value="2.73 A"/>
    <property type="chains" value="A=1-710"/>
</dbReference>
<dbReference type="PDB" id="3EQ9">
    <property type="method" value="X-ray"/>
    <property type="resolution" value="2.47 A"/>
    <property type="chains" value="A=1-710"/>
</dbReference>
<dbReference type="PDB" id="4AMY">
    <property type="method" value="X-ray"/>
    <property type="resolution" value="2.00 A"/>
    <property type="chains" value="A=1-710"/>
</dbReference>
<dbReference type="PDB" id="4AMZ">
    <property type="method" value="X-ray"/>
    <property type="resolution" value="2.00 A"/>
    <property type="chains" value="A=1-710"/>
</dbReference>
<dbReference type="PDB" id="4AN0">
    <property type="method" value="X-ray"/>
    <property type="resolution" value="2.20 A"/>
    <property type="chains" value="A=1-710"/>
</dbReference>
<dbReference type="PDB" id="4AN1">
    <property type="method" value="X-ray"/>
    <property type="resolution" value="1.90 A"/>
    <property type="chains" value="A=1-710"/>
</dbReference>
<dbReference type="PDB" id="4AX4">
    <property type="method" value="X-ray"/>
    <property type="resolution" value="1.60 A"/>
    <property type="chains" value="A=1-710"/>
</dbReference>
<dbReference type="PDB" id="4BCB">
    <property type="method" value="X-ray"/>
    <property type="resolution" value="1.70 A"/>
    <property type="chains" value="A=1-710"/>
</dbReference>
<dbReference type="PDB" id="4BCC">
    <property type="method" value="X-ray"/>
    <property type="resolution" value="1.65 A"/>
    <property type="chains" value="A=1-710"/>
</dbReference>
<dbReference type="PDB" id="4BCD">
    <property type="method" value="X-ray"/>
    <property type="resolution" value="1.50 A"/>
    <property type="chains" value="A=1-710"/>
</dbReference>
<dbReference type="PDBsum" id="1E5T"/>
<dbReference type="PDBsum" id="1E8M"/>
<dbReference type="PDBsum" id="1E8N"/>
<dbReference type="PDBsum" id="1H2W"/>
<dbReference type="PDBsum" id="1H2X"/>
<dbReference type="PDBsum" id="1H2Y"/>
<dbReference type="PDBsum" id="1H2Z"/>
<dbReference type="PDBsum" id="1O6F"/>
<dbReference type="PDBsum" id="1O6G"/>
<dbReference type="PDBsum" id="1QFM"/>
<dbReference type="PDBsum" id="1QFS"/>
<dbReference type="PDBsum" id="1UOO"/>
<dbReference type="PDBsum" id="1UOP"/>
<dbReference type="PDBsum" id="1UOQ"/>
<dbReference type="PDBsum" id="1VZ2"/>
<dbReference type="PDBsum" id="1VZ3"/>
<dbReference type="PDBsum" id="2XDW"/>
<dbReference type="PDBsum" id="3EQ7"/>
<dbReference type="PDBsum" id="3EQ8"/>
<dbReference type="PDBsum" id="3EQ9"/>
<dbReference type="PDBsum" id="4AMY"/>
<dbReference type="PDBsum" id="4AMZ"/>
<dbReference type="PDBsum" id="4AN0"/>
<dbReference type="PDBsum" id="4AN1"/>
<dbReference type="PDBsum" id="4AX4"/>
<dbReference type="PDBsum" id="4BCB"/>
<dbReference type="PDBsum" id="4BCC"/>
<dbReference type="PDBsum" id="4BCD"/>
<dbReference type="SMR" id="P23687"/>
<dbReference type="FunCoup" id="P23687">
    <property type="interactions" value="1469"/>
</dbReference>
<dbReference type="STRING" id="9823.ENSSSCP00000042303"/>
<dbReference type="BindingDB" id="P23687"/>
<dbReference type="ChEMBL" id="CHEMBL2461"/>
<dbReference type="ESTHER" id="pig-ppce">
    <property type="family name" value="S9N_PPCE_Peptidase_S9"/>
</dbReference>
<dbReference type="MEROPS" id="S09.001"/>
<dbReference type="PaxDb" id="9823-ENSSSCP00000004715"/>
<dbReference type="PeptideAtlas" id="P23687"/>
<dbReference type="Ensembl" id="ENSSSCT00000004829.5">
    <property type="protein sequence ID" value="ENSSSCP00000004715.4"/>
    <property type="gene ID" value="ENSSSCG00000004368.5"/>
</dbReference>
<dbReference type="Ensembl" id="ENSSSCT00055025909.1">
    <property type="protein sequence ID" value="ENSSSCP00055020588.1"/>
    <property type="gene ID" value="ENSSSCG00055013045.1"/>
</dbReference>
<dbReference type="Ensembl" id="ENSSSCT00115000742">
    <property type="protein sequence ID" value="ENSSSCP00115000680"/>
    <property type="gene ID" value="ENSSSCG00115000498"/>
</dbReference>
<dbReference type="GeneID" id="445540"/>
<dbReference type="KEGG" id="ssc:445540"/>
<dbReference type="CTD" id="5550"/>
<dbReference type="VGNC" id="VGNC:103157">
    <property type="gene designation" value="PREP"/>
</dbReference>
<dbReference type="eggNOG" id="KOG2237">
    <property type="taxonomic scope" value="Eukaryota"/>
</dbReference>
<dbReference type="GeneTree" id="ENSGT00530000063426"/>
<dbReference type="HOGENOM" id="CLU_011290_1_2_1"/>
<dbReference type="InParanoid" id="P23687"/>
<dbReference type="OMA" id="LDPWFSH"/>
<dbReference type="OrthoDB" id="248387at2759"/>
<dbReference type="BRENDA" id="3.4.21.26">
    <property type="organism ID" value="6170"/>
</dbReference>
<dbReference type="EvolutionaryTrace" id="P23687"/>
<dbReference type="PRO" id="PR:P23687"/>
<dbReference type="Proteomes" id="UP000008227">
    <property type="component" value="Chromosome 1"/>
</dbReference>
<dbReference type="Proteomes" id="UP000314985">
    <property type="component" value="Unplaced"/>
</dbReference>
<dbReference type="Proteomes" id="UP000694570">
    <property type="component" value="Unplaced"/>
</dbReference>
<dbReference type="Proteomes" id="UP000694571">
    <property type="component" value="Unplaced"/>
</dbReference>
<dbReference type="Proteomes" id="UP000694720">
    <property type="component" value="Unplaced"/>
</dbReference>
<dbReference type="Proteomes" id="UP000694722">
    <property type="component" value="Unplaced"/>
</dbReference>
<dbReference type="Proteomes" id="UP000694723">
    <property type="component" value="Unplaced"/>
</dbReference>
<dbReference type="Proteomes" id="UP000694724">
    <property type="component" value="Unplaced"/>
</dbReference>
<dbReference type="Proteomes" id="UP000694725">
    <property type="component" value="Unplaced"/>
</dbReference>
<dbReference type="Proteomes" id="UP000694726">
    <property type="component" value="Unplaced"/>
</dbReference>
<dbReference type="Proteomes" id="UP000694727">
    <property type="component" value="Unplaced"/>
</dbReference>
<dbReference type="Proteomes" id="UP000694728">
    <property type="component" value="Unplaced"/>
</dbReference>
<dbReference type="GO" id="GO:0005737">
    <property type="term" value="C:cytoplasm"/>
    <property type="evidence" value="ECO:0000250"/>
    <property type="project" value="UniProtKB"/>
</dbReference>
<dbReference type="GO" id="GO:0004252">
    <property type="term" value="F:serine-type endopeptidase activity"/>
    <property type="evidence" value="ECO:0007669"/>
    <property type="project" value="UniProtKB-EC"/>
</dbReference>
<dbReference type="GO" id="GO:0006508">
    <property type="term" value="P:proteolysis"/>
    <property type="evidence" value="ECO:0007669"/>
    <property type="project" value="UniProtKB-KW"/>
</dbReference>
<dbReference type="FunFam" id="2.130.10.120:FF:000001">
    <property type="entry name" value="Prolyl endopeptidase"/>
    <property type="match status" value="1"/>
</dbReference>
<dbReference type="FunFam" id="3.40.50.1820:FF:000005">
    <property type="entry name" value="Prolyl endopeptidase"/>
    <property type="match status" value="1"/>
</dbReference>
<dbReference type="FunFam" id="3.40.50.1820:FF:000275">
    <property type="entry name" value="Prolyl endopeptidase"/>
    <property type="match status" value="1"/>
</dbReference>
<dbReference type="Gene3D" id="3.40.50.1820">
    <property type="entry name" value="alpha/beta hydrolase"/>
    <property type="match status" value="1"/>
</dbReference>
<dbReference type="Gene3D" id="2.130.10.120">
    <property type="entry name" value="Prolyl oligopeptidase, N-terminal domain"/>
    <property type="match status" value="1"/>
</dbReference>
<dbReference type="InterPro" id="IPR029058">
    <property type="entry name" value="AB_hydrolase_fold"/>
</dbReference>
<dbReference type="InterPro" id="IPR002471">
    <property type="entry name" value="Pept_S9_AS"/>
</dbReference>
<dbReference type="InterPro" id="IPR023302">
    <property type="entry name" value="Pept_S9A_N"/>
</dbReference>
<dbReference type="InterPro" id="IPR001375">
    <property type="entry name" value="Peptidase_S9_cat"/>
</dbReference>
<dbReference type="InterPro" id="IPR002470">
    <property type="entry name" value="Peptidase_S9A"/>
</dbReference>
<dbReference type="InterPro" id="IPR051167">
    <property type="entry name" value="Prolyl_oligopep/macrocyclase"/>
</dbReference>
<dbReference type="PANTHER" id="PTHR42881">
    <property type="entry name" value="PROLYL ENDOPEPTIDASE"/>
    <property type="match status" value="1"/>
</dbReference>
<dbReference type="PANTHER" id="PTHR42881:SF2">
    <property type="entry name" value="PROLYL ENDOPEPTIDASE"/>
    <property type="match status" value="1"/>
</dbReference>
<dbReference type="Pfam" id="PF00326">
    <property type="entry name" value="Peptidase_S9"/>
    <property type="match status" value="1"/>
</dbReference>
<dbReference type="Pfam" id="PF02897">
    <property type="entry name" value="Peptidase_S9_N"/>
    <property type="match status" value="1"/>
</dbReference>
<dbReference type="PRINTS" id="PR00862">
    <property type="entry name" value="PROLIGOPTASE"/>
</dbReference>
<dbReference type="SUPFAM" id="SSF53474">
    <property type="entry name" value="alpha/beta-Hydrolases"/>
    <property type="match status" value="1"/>
</dbReference>
<dbReference type="SUPFAM" id="SSF50993">
    <property type="entry name" value="Peptidase/esterase 'gauge' domain"/>
    <property type="match status" value="1"/>
</dbReference>
<dbReference type="PROSITE" id="PS00708">
    <property type="entry name" value="PRO_ENDOPEP_SER"/>
    <property type="match status" value="1"/>
</dbReference>
<gene>
    <name type="primary">PREP</name>
</gene>
<comment type="function">
    <text>Cleaves peptide bonds on the C-terminal side of prolyl residues within peptides that are up to approximately 30 amino acids long.</text>
</comment>
<comment type="catalytic activity">
    <reaction>
        <text>Hydrolysis of Pro-|-Xaa &gt;&gt; Ala-|-Xaa in oligopeptides.</text>
        <dbReference type="EC" id="3.4.21.26"/>
    </reaction>
</comment>
<comment type="subcellular location">
    <subcellularLocation>
        <location>Cytoplasm</location>
    </subcellularLocation>
</comment>
<comment type="tissue specificity">
    <text>Ubiquitous.</text>
</comment>
<comment type="PTM">
    <text>The N-terminus is blocked.</text>
</comment>
<comment type="similarity">
    <text evidence="5">Belongs to the peptidase S9A family.</text>
</comment>
<keyword id="KW-0002">3D-structure</keyword>
<keyword id="KW-0007">Acetylation</keyword>
<keyword id="KW-0963">Cytoplasm</keyword>
<keyword id="KW-0903">Direct protein sequencing</keyword>
<keyword id="KW-0378">Hydrolase</keyword>
<keyword id="KW-0645">Protease</keyword>
<keyword id="KW-1185">Reference proteome</keyword>
<keyword id="KW-0720">Serine protease</keyword>
<accession>P23687</accession>